<proteinExistence type="evidence at protein level"/>
<reference key="1">
    <citation type="journal article" date="1999" name="Biochem. Biophys. Res. Commun.">
        <title>Cloning and functional characterization of a sodium-dependent phosphate transporter expressed in human lung and small intestine.</title>
        <authorList>
            <person name="Feild J.A."/>
            <person name="Zhang L."/>
            <person name="Brun K.A."/>
            <person name="Brooks D.P."/>
            <person name="Edwards R.M."/>
        </authorList>
    </citation>
    <scope>NUCLEOTIDE SEQUENCE [MRNA] (ISOFORM 1)</scope>
    <scope>BIOPHYSICOCHEMICAL PROPERTIES (ISOFORM 1)</scope>
    <scope>TISSUE SPECIFICITY</scope>
    <scope>FUNCTION (ISOFORM 1)</scope>
    <scope>TRANSPORTER ACTIVITY (ISOFORM 1)</scope>
    <scope>VARIANT GLY-634</scope>
    <source>
        <tissue>Lung</tissue>
        <tissue>Small intestine</tissue>
    </source>
</reference>
<reference key="2">
    <citation type="journal article" date="1999" name="Genomics">
        <title>Molecular cloning, functional characterization, tissue distribution, and chromosomal localization of a human, small intestinal sodium-phosphate (Na+-Pi) transporter (SLC34A2).</title>
        <authorList>
            <person name="Xu H."/>
            <person name="Bai L."/>
            <person name="Collins J.F."/>
            <person name="Ghishan F.K."/>
        </authorList>
    </citation>
    <scope>NUCLEOTIDE SEQUENCE [MRNA] (ISOFORM 2)</scope>
    <scope>FUNCTION (ISOFORM 2)</scope>
    <scope>TRANSPORTER ACTIVITY (ISOFORM 2)</scope>
    <scope>TISSUE SPECIFICITY</scope>
    <scope>VARIANT GLY-634</scope>
    <source>
        <tissue>Small intestine</tissue>
    </source>
</reference>
<reference key="3">
    <citation type="journal article" date="2005" name="Nature">
        <title>Generation and annotation of the DNA sequences of human chromosomes 2 and 4.</title>
        <authorList>
            <person name="Hillier L.W."/>
            <person name="Graves T.A."/>
            <person name="Fulton R.S."/>
            <person name="Fulton L.A."/>
            <person name="Pepin K.H."/>
            <person name="Minx P."/>
            <person name="Wagner-McPherson C."/>
            <person name="Layman D."/>
            <person name="Wylie K."/>
            <person name="Sekhon M."/>
            <person name="Becker M.C."/>
            <person name="Fewell G.A."/>
            <person name="Delehaunty K.D."/>
            <person name="Miner T.L."/>
            <person name="Nash W.E."/>
            <person name="Kremitzki C."/>
            <person name="Oddy L."/>
            <person name="Du H."/>
            <person name="Sun H."/>
            <person name="Bradshaw-Cordum H."/>
            <person name="Ali J."/>
            <person name="Carter J."/>
            <person name="Cordes M."/>
            <person name="Harris A."/>
            <person name="Isak A."/>
            <person name="van Brunt A."/>
            <person name="Nguyen C."/>
            <person name="Du F."/>
            <person name="Courtney L."/>
            <person name="Kalicki J."/>
            <person name="Ozersky P."/>
            <person name="Abbott S."/>
            <person name="Armstrong J."/>
            <person name="Belter E.A."/>
            <person name="Caruso L."/>
            <person name="Cedroni M."/>
            <person name="Cotton M."/>
            <person name="Davidson T."/>
            <person name="Desai A."/>
            <person name="Elliott G."/>
            <person name="Erb T."/>
            <person name="Fronick C."/>
            <person name="Gaige T."/>
            <person name="Haakenson W."/>
            <person name="Haglund K."/>
            <person name="Holmes A."/>
            <person name="Harkins R."/>
            <person name="Kim K."/>
            <person name="Kruchowski S.S."/>
            <person name="Strong C.M."/>
            <person name="Grewal N."/>
            <person name="Goyea E."/>
            <person name="Hou S."/>
            <person name="Levy A."/>
            <person name="Martinka S."/>
            <person name="Mead K."/>
            <person name="McLellan M.D."/>
            <person name="Meyer R."/>
            <person name="Randall-Maher J."/>
            <person name="Tomlinson C."/>
            <person name="Dauphin-Kohlberg S."/>
            <person name="Kozlowicz-Reilly A."/>
            <person name="Shah N."/>
            <person name="Swearengen-Shahid S."/>
            <person name="Snider J."/>
            <person name="Strong J.T."/>
            <person name="Thompson J."/>
            <person name="Yoakum M."/>
            <person name="Leonard S."/>
            <person name="Pearman C."/>
            <person name="Trani L."/>
            <person name="Radionenko M."/>
            <person name="Waligorski J.E."/>
            <person name="Wang C."/>
            <person name="Rock S.M."/>
            <person name="Tin-Wollam A.-M."/>
            <person name="Maupin R."/>
            <person name="Latreille P."/>
            <person name="Wendl M.C."/>
            <person name="Yang S.-P."/>
            <person name="Pohl C."/>
            <person name="Wallis J.W."/>
            <person name="Spieth J."/>
            <person name="Bieri T.A."/>
            <person name="Berkowicz N."/>
            <person name="Nelson J.O."/>
            <person name="Osborne J."/>
            <person name="Ding L."/>
            <person name="Meyer R."/>
            <person name="Sabo A."/>
            <person name="Shotland Y."/>
            <person name="Sinha P."/>
            <person name="Wohldmann P.E."/>
            <person name="Cook L.L."/>
            <person name="Hickenbotham M.T."/>
            <person name="Eldred J."/>
            <person name="Williams D."/>
            <person name="Jones T.A."/>
            <person name="She X."/>
            <person name="Ciccarelli F.D."/>
            <person name="Izaurralde E."/>
            <person name="Taylor J."/>
            <person name="Schmutz J."/>
            <person name="Myers R.M."/>
            <person name="Cox D.R."/>
            <person name="Huang X."/>
            <person name="McPherson J.D."/>
            <person name="Mardis E.R."/>
            <person name="Clifton S.W."/>
            <person name="Warren W.C."/>
            <person name="Chinwalla A.T."/>
            <person name="Eddy S.R."/>
            <person name="Marra M.A."/>
            <person name="Ovcharenko I."/>
            <person name="Furey T.S."/>
            <person name="Miller W."/>
            <person name="Eichler E.E."/>
            <person name="Bork P."/>
            <person name="Suyama M."/>
            <person name="Torrents D."/>
            <person name="Waterston R.H."/>
            <person name="Wilson R.K."/>
        </authorList>
    </citation>
    <scope>NUCLEOTIDE SEQUENCE [LARGE SCALE GENOMIC DNA]</scope>
</reference>
<reference key="4">
    <citation type="journal article" date="2004" name="Genome Res.">
        <title>The status, quality, and expansion of the NIH full-length cDNA project: the Mammalian Gene Collection (MGC).</title>
        <authorList>
            <consortium name="The MGC Project Team"/>
        </authorList>
    </citation>
    <scope>NUCLEOTIDE SEQUENCE [LARGE SCALE MRNA] (ISOFORM 2)</scope>
    <scope>VARIANT GLY-634</scope>
</reference>
<reference key="5">
    <citation type="journal article" date="2001" name="Am. J. Physiol.">
        <title>Regulation of the human sodium-phosphate cotransporter NaPi-IIb gene promoter by epidermal growth factor.</title>
        <authorList>
            <person name="Xu H."/>
            <person name="Collins J.F."/>
            <person name="Bai L."/>
            <person name="Kiela P.R."/>
            <person name="Ghishan F.K."/>
        </authorList>
    </citation>
    <scope>NUCLEOTIDE SEQUENCE [GENOMIC DNA] OF 1-592 (ISOFORM 2)</scope>
    <scope>INDUCTION</scope>
    <source>
        <tissue>Intestine</tissue>
    </source>
</reference>
<reference key="6">
    <citation type="journal article" date="2004" name="Nat. Genet.">
        <title>Complete sequencing and characterization of 21,243 full-length human cDNAs.</title>
        <authorList>
            <person name="Ota T."/>
            <person name="Suzuki Y."/>
            <person name="Nishikawa T."/>
            <person name="Otsuki T."/>
            <person name="Sugiyama T."/>
            <person name="Irie R."/>
            <person name="Wakamatsu A."/>
            <person name="Hayashi K."/>
            <person name="Sato H."/>
            <person name="Nagai K."/>
            <person name="Kimura K."/>
            <person name="Makita H."/>
            <person name="Sekine M."/>
            <person name="Obayashi M."/>
            <person name="Nishi T."/>
            <person name="Shibahara T."/>
            <person name="Tanaka T."/>
            <person name="Ishii S."/>
            <person name="Yamamoto J."/>
            <person name="Saito K."/>
            <person name="Kawai Y."/>
            <person name="Isono Y."/>
            <person name="Nakamura Y."/>
            <person name="Nagahari K."/>
            <person name="Murakami K."/>
            <person name="Yasuda T."/>
            <person name="Iwayanagi T."/>
            <person name="Wagatsuma M."/>
            <person name="Shiratori A."/>
            <person name="Sudo H."/>
            <person name="Hosoiri T."/>
            <person name="Kaku Y."/>
            <person name="Kodaira H."/>
            <person name="Kondo H."/>
            <person name="Sugawara M."/>
            <person name="Takahashi M."/>
            <person name="Kanda K."/>
            <person name="Yokoi T."/>
            <person name="Furuya T."/>
            <person name="Kikkawa E."/>
            <person name="Omura Y."/>
            <person name="Abe K."/>
            <person name="Kamihara K."/>
            <person name="Katsuta N."/>
            <person name="Sato K."/>
            <person name="Tanikawa M."/>
            <person name="Yamazaki M."/>
            <person name="Ninomiya K."/>
            <person name="Ishibashi T."/>
            <person name="Yamashita H."/>
            <person name="Murakawa K."/>
            <person name="Fujimori K."/>
            <person name="Tanai H."/>
            <person name="Kimata M."/>
            <person name="Watanabe M."/>
            <person name="Hiraoka S."/>
            <person name="Chiba Y."/>
            <person name="Ishida S."/>
            <person name="Ono Y."/>
            <person name="Takiguchi S."/>
            <person name="Watanabe S."/>
            <person name="Yosida M."/>
            <person name="Hotuta T."/>
            <person name="Kusano J."/>
            <person name="Kanehori K."/>
            <person name="Takahashi-Fujii A."/>
            <person name="Hara H."/>
            <person name="Tanase T.-O."/>
            <person name="Nomura Y."/>
            <person name="Togiya S."/>
            <person name="Komai F."/>
            <person name="Hara R."/>
            <person name="Takeuchi K."/>
            <person name="Arita M."/>
            <person name="Imose N."/>
            <person name="Musashino K."/>
            <person name="Yuuki H."/>
            <person name="Oshima A."/>
            <person name="Sasaki N."/>
            <person name="Aotsuka S."/>
            <person name="Yoshikawa Y."/>
            <person name="Matsunawa H."/>
            <person name="Ichihara T."/>
            <person name="Shiohata N."/>
            <person name="Sano S."/>
            <person name="Moriya S."/>
            <person name="Momiyama H."/>
            <person name="Satoh N."/>
            <person name="Takami S."/>
            <person name="Terashima Y."/>
            <person name="Suzuki O."/>
            <person name="Nakagawa S."/>
            <person name="Senoh A."/>
            <person name="Mizoguchi H."/>
            <person name="Goto Y."/>
            <person name="Shimizu F."/>
            <person name="Wakebe H."/>
            <person name="Hishigaki H."/>
            <person name="Watanabe T."/>
            <person name="Sugiyama A."/>
            <person name="Takemoto M."/>
            <person name="Kawakami B."/>
            <person name="Yamazaki M."/>
            <person name="Watanabe K."/>
            <person name="Kumagai A."/>
            <person name="Itakura S."/>
            <person name="Fukuzumi Y."/>
            <person name="Fujimori Y."/>
            <person name="Komiyama M."/>
            <person name="Tashiro H."/>
            <person name="Tanigami A."/>
            <person name="Fujiwara T."/>
            <person name="Ono T."/>
            <person name="Yamada K."/>
            <person name="Fujii Y."/>
            <person name="Ozaki K."/>
            <person name="Hirao M."/>
            <person name="Ohmori Y."/>
            <person name="Kawabata A."/>
            <person name="Hikiji T."/>
            <person name="Kobatake N."/>
            <person name="Inagaki H."/>
            <person name="Ikema Y."/>
            <person name="Okamoto S."/>
            <person name="Okitani R."/>
            <person name="Kawakami T."/>
            <person name="Noguchi S."/>
            <person name="Itoh T."/>
            <person name="Shigeta K."/>
            <person name="Senba T."/>
            <person name="Matsumura K."/>
            <person name="Nakajima Y."/>
            <person name="Mizuno T."/>
            <person name="Morinaga M."/>
            <person name="Sasaki M."/>
            <person name="Togashi T."/>
            <person name="Oyama M."/>
            <person name="Hata H."/>
            <person name="Watanabe M."/>
            <person name="Komatsu T."/>
            <person name="Mizushima-Sugano J."/>
            <person name="Satoh T."/>
            <person name="Shirai Y."/>
            <person name="Takahashi Y."/>
            <person name="Nakagawa K."/>
            <person name="Okumura K."/>
            <person name="Nagase T."/>
            <person name="Nomura N."/>
            <person name="Kikuchi H."/>
            <person name="Masuho Y."/>
            <person name="Yamashita R."/>
            <person name="Nakai K."/>
            <person name="Yada T."/>
            <person name="Nakamura Y."/>
            <person name="Ohara O."/>
            <person name="Isogai T."/>
            <person name="Sugano S."/>
        </authorList>
    </citation>
    <scope>NUCLEOTIDE SEQUENCE [LARGE SCALE MRNA] OF 266-690</scope>
    <scope>VARIANT GLY-634</scope>
    <source>
        <tissue>Ovarian carcinoma</tissue>
    </source>
</reference>
<reference key="7">
    <citation type="journal article" date="2003" name="Genes Chromosomes Cancer">
        <title>Fusion of FIG to the receptor tyrosine kinase ROS in a glioblastoma with an interstitial del(6)(q21q21).</title>
        <authorList>
            <person name="Charest A."/>
            <person name="Lane K."/>
            <person name="McMahon K."/>
            <person name="Park J."/>
            <person name="Preisinger E."/>
            <person name="Conroy H."/>
            <person name="Housman D."/>
        </authorList>
    </citation>
    <scope>DISEASE</scope>
    <scope>CHROMOSOMAL TRANSLOCATION WITH ROS1</scope>
</reference>
<reference key="8">
    <citation type="journal article" date="2006" name="Am. J. Hum. Genet.">
        <title>Mutations in SLC34A2 cause pulmonary alveolar microlithiasis and are possibly associated with testicular microlithiasis.</title>
        <authorList>
            <person name="Corut A."/>
            <person name="Senyigit A."/>
            <person name="Ugur S.A."/>
            <person name="Altin S."/>
            <person name="Ozcelik U."/>
            <person name="Calisir H."/>
            <person name="Yildirim Z."/>
            <person name="Gocmen A."/>
            <person name="Tolun A."/>
        </authorList>
    </citation>
    <scope>VARIANT PULAM ARG-106</scope>
</reference>
<gene>
    <name type="primary">SLC34A2</name>
</gene>
<sequence length="690" mass="75759">MAPWPELGDAQPNPDKYLEGAAGQQPTAPDKSKETNKTDNTEAPVTKIELLPSYSTATLIDEPTEVDDPWNLPTLQDSGIKWSERDTKGKILCFFQGIGRLILLLGFLYFFVCSLDILSSAFQLVGGKMAGQFFSNSSIMSNPLLGLVIGVLVTVLVQSSSTSTSIVVSMVSSSLLTVRAAIPIIMGANIGTSITNTIVALMQVGDRSEFRRAFAGATVHDFFNWLSVLVLLPVEVATHYLEIITQLIVESFHFKNGEDAPDLLKVITKPFTKLIVQLDKKVISQIAMNDEKAKNKSLVKIWCKTFTNKTQINVTVPSTANCTSPSLCWTDGIQNWTMKNVTYKENIAKCQHIFVNFHLPDLAVGTILLILSLLVLCGCLIMIVKILGSVLKGQVATVIKKTINTDFPFPFAWLTGYLAILVGAGMTFIVQSSSVFTSALTPLIGIGVITIERAYPLTLGSNIGTTTTAILAALASPGNALRSSLQIALCHFFFNISGILLWYPIPFTRLPIRMAKGLGNISAKYRWFAVFYLIIFFFLIPLTVFGLSLAGWRVLVGVGVPVVFIIILVLCLRLLQSRCPRVLPKKLQNWNFLPLWMRSLKPWDAVVSKFTGCFQMRCCCCCRVCCRACCLLCDCPKCCRCSKCCEDLEEAQEGQDVPVKAPETFDNITISREAQGEVPASDSKTECTAL</sequence>
<feature type="chain" id="PRO_0000068613" description="Sodium-dependent phosphate transport protein 2B">
    <location>
        <begin position="1"/>
        <end position="690"/>
    </location>
</feature>
<feature type="topological domain" description="Cytoplasmic" evidence="3">
    <location>
        <begin position="1"/>
        <end position="100"/>
    </location>
</feature>
<feature type="transmembrane region" description="Helical; Name=M1" evidence="3">
    <location>
        <begin position="101"/>
        <end position="121"/>
    </location>
</feature>
<feature type="topological domain" description="Extracellular" evidence="3">
    <location>
        <begin position="122"/>
        <end position="135"/>
    </location>
</feature>
<feature type="transmembrane region" description="Helical; Name=M2" evidence="3">
    <location>
        <begin position="136"/>
        <end position="156"/>
    </location>
</feature>
<feature type="topological domain" description="Cytoplasmic" evidence="3">
    <location>
        <begin position="157"/>
        <end position="212"/>
    </location>
</feature>
<feature type="transmembrane region" description="Helical; Name=M3" evidence="3">
    <location>
        <begin position="213"/>
        <end position="233"/>
    </location>
</feature>
<feature type="topological domain" description="Extracellular" evidence="3">
    <location>
        <begin position="234"/>
        <end position="362"/>
    </location>
</feature>
<feature type="transmembrane region" description="Helical; Name=M4" evidence="3">
    <location>
        <begin position="363"/>
        <end position="383"/>
    </location>
</feature>
<feature type="topological domain" description="Cytoplasmic" evidence="3">
    <location>
        <begin position="384"/>
        <end position="407"/>
    </location>
</feature>
<feature type="transmembrane region" description="Helical; Name=M5" evidence="3">
    <location>
        <begin position="408"/>
        <end position="428"/>
    </location>
</feature>
<feature type="topological domain" description="Extracellular" evidence="3">
    <location>
        <begin position="429"/>
        <end position="485"/>
    </location>
</feature>
<feature type="transmembrane region" description="Helical; Name=M6" evidence="3">
    <location>
        <begin position="486"/>
        <end position="506"/>
    </location>
</feature>
<feature type="topological domain" description="Cytoplasmic" evidence="3">
    <location>
        <begin position="507"/>
        <end position="525"/>
    </location>
</feature>
<feature type="transmembrane region" description="Helical; Name=M7" evidence="3">
    <location>
        <begin position="526"/>
        <end position="546"/>
    </location>
</feature>
<feature type="topological domain" description="Extracellular" evidence="3">
    <location>
        <begin position="547"/>
        <end position="552"/>
    </location>
</feature>
<feature type="transmembrane region" description="Helical; Name=M8" evidence="3">
    <location>
        <begin position="553"/>
        <end position="573"/>
    </location>
</feature>
<feature type="topological domain" description="Cytoplasmic" evidence="3">
    <location>
        <begin position="574"/>
        <end position="689"/>
    </location>
</feature>
<feature type="region of interest" description="Disordered" evidence="4">
    <location>
        <begin position="1"/>
        <end position="42"/>
    </location>
</feature>
<feature type="compositionally biased region" description="Basic and acidic residues" evidence="4">
    <location>
        <begin position="30"/>
        <end position="40"/>
    </location>
</feature>
<feature type="site" description="Breakpoint for translocation to form a SLC34A2-ROS1 fusion protein">
    <location>
        <begin position="126"/>
        <end position="127"/>
    </location>
</feature>
<feature type="glycosylation site" description="N-linked (GlcNAc...) asparagine" evidence="3">
    <location>
        <position position="295"/>
    </location>
</feature>
<feature type="glycosylation site" description="N-linked (GlcNAc...) asparagine" evidence="3">
    <location>
        <position position="308"/>
    </location>
</feature>
<feature type="glycosylation site" description="N-linked (GlcNAc...) asparagine" evidence="3">
    <location>
        <position position="313"/>
    </location>
</feature>
<feature type="glycosylation site" description="N-linked (GlcNAc...) asparagine" evidence="3">
    <location>
        <position position="321"/>
    </location>
</feature>
<feature type="glycosylation site" description="N-linked (GlcNAc...) asparagine" evidence="3">
    <location>
        <position position="340"/>
    </location>
</feature>
<feature type="disulfide bond" evidence="1">
    <location>
        <begin position="303"/>
        <end position="350"/>
    </location>
</feature>
<feature type="splice variant" id="VSP_016755" description="In isoform 2." evidence="12 13">
    <original>TD</original>
    <variation>N</variation>
    <location>
        <begin position="38"/>
        <end position="39"/>
    </location>
</feature>
<feature type="sequence variant" id="VAR_034156" description="In dbSNP:rs35426730.">
    <original>V</original>
    <variation>A</variation>
    <location>
        <position position="45"/>
    </location>
</feature>
<feature type="sequence variant" id="VAR_030677" description="In PULAM; dbSNP:rs137853142." evidence="11">
    <original>G</original>
    <variation>R</variation>
    <location>
        <position position="106"/>
    </location>
</feature>
<feature type="sequence variant" id="VAR_030678" description="In dbSNP:rs6448389." evidence="5 6 9 10">
    <original>D</original>
    <variation>G</variation>
    <location>
        <position position="634"/>
    </location>
</feature>
<feature type="sequence conflict" description="In Ref. 2; AAF31328 and 5; AAL55657." evidence="14" ref="2 5">
    <original>V</original>
    <variation>L</variation>
    <location>
        <position position="228"/>
    </location>
</feature>
<feature type="sequence conflict" description="In Ref. 6; BAC11354." evidence="14" ref="6">
    <original>T</original>
    <variation>V</variation>
    <location>
        <position position="330"/>
    </location>
</feature>
<feature type="sequence conflict" description="In Ref. 6; BAC11354." evidence="14" ref="6">
    <location>
        <begin position="590"/>
        <end position="595"/>
    </location>
</feature>
<feature type="sequence conflict" description="In Ref. 1; AAC98695." evidence="14" ref="1">
    <original>C</original>
    <variation>Y</variation>
    <location>
        <position position="620"/>
    </location>
</feature>
<accession>O95436</accession>
<accession>A5PL17</accession>
<accession>Q8N2K2</accession>
<accession>Q8WYA9</accession>
<accession>Q9P0V7</accession>
<comment type="function">
    <text evidence="5">Involved in actively transporting phosphate into cells via Na(+) cotransport.</text>
</comment>
<comment type="catalytic activity">
    <molecule>Isoform 1</molecule>
    <reaction evidence="5">
        <text>3 Na(+)(out) + phosphate(out) = 3 Na(+)(in) + phosphate(in)</text>
        <dbReference type="Rhea" id="RHEA:71255"/>
        <dbReference type="ChEBI" id="CHEBI:29101"/>
        <dbReference type="ChEBI" id="CHEBI:43474"/>
    </reaction>
    <physiologicalReaction direction="left-to-right" evidence="15">
        <dbReference type="Rhea" id="RHEA:71256"/>
    </physiologicalReaction>
</comment>
<comment type="catalytic activity">
    <molecule>Isoform 2</molecule>
    <reaction evidence="6">
        <text>3 Na(+)(out) + phosphate(out) = 3 Na(+)(in) + phosphate(in)</text>
        <dbReference type="Rhea" id="RHEA:71255"/>
        <dbReference type="ChEBI" id="CHEBI:29101"/>
        <dbReference type="ChEBI" id="CHEBI:43474"/>
    </reaction>
    <physiologicalReaction direction="left-to-right" evidence="16">
        <dbReference type="Rhea" id="RHEA:71256"/>
    </physiologicalReaction>
</comment>
<comment type="biophysicochemical properties">
    <molecule>Isoform 1</molecule>
    <phDependence>
        <text evidence="5">Optimum pH is 6.6.</text>
    </phDependence>
</comment>
<comment type="interaction">
    <interactant intactId="EBI-12811757">
        <id>O95436-2</id>
    </interactant>
    <interactant intactId="EBI-11957045">
        <id>Q9NVV5-2</id>
        <label>AIG1</label>
    </interactant>
    <organismsDiffer>false</organismsDiffer>
    <experiments>3</experiments>
</comment>
<comment type="interaction">
    <interactant intactId="EBI-12811757">
        <id>O95436-2</id>
    </interactant>
    <interactant intactId="EBI-711490">
        <id>Q9UKR5</id>
        <label>ERG28</label>
    </interactant>
    <organismsDiffer>false</organismsDiffer>
    <experiments>3</experiments>
</comment>
<comment type="interaction">
    <interactant intactId="EBI-12811757">
        <id>O95436-2</id>
    </interactant>
    <interactant intactId="EBI-12244272">
        <id>Q02747</id>
        <label>GUCA2A</label>
    </interactant>
    <organismsDiffer>false</organismsDiffer>
    <experiments>3</experiments>
</comment>
<comment type="interaction">
    <interactant intactId="EBI-12811757">
        <id>O95436-2</id>
    </interactant>
    <interactant intactId="EBI-10266796">
        <id>Q8N5M9</id>
        <label>JAGN1</label>
    </interactant>
    <organismsDiffer>false</organismsDiffer>
    <experiments>3</experiments>
</comment>
<comment type="interaction">
    <interactant intactId="EBI-12811757">
        <id>O95436-2</id>
    </interactant>
    <interactant intactId="EBI-2820517">
        <id>Q8TAF8</id>
        <label>LHFPL5</label>
    </interactant>
    <organismsDiffer>false</organismsDiffer>
    <experiments>3</experiments>
</comment>
<comment type="interaction">
    <interactant intactId="EBI-12811757">
        <id>O95436-2</id>
    </interactant>
    <interactant intactId="EBI-692836">
        <id>P26678</id>
        <label>PLN</label>
    </interactant>
    <organismsDiffer>false</organismsDiffer>
    <experiments>3</experiments>
</comment>
<comment type="interaction">
    <interactant intactId="EBI-12811757">
        <id>O95436-2</id>
    </interactant>
    <interactant intactId="EBI-8652812">
        <id>P54315</id>
        <label>PNLIPRP1</label>
    </interactant>
    <organismsDiffer>false</organismsDiffer>
    <experiments>3</experiments>
</comment>
<comment type="interaction">
    <interactant intactId="EBI-12811757">
        <id>O95436-2</id>
    </interactant>
    <interactant intactId="EBI-10244780">
        <id>Q5QGT7</id>
        <label>RTP2</label>
    </interactant>
    <organismsDiffer>false</organismsDiffer>
    <experiments>3</experiments>
</comment>
<comment type="interaction">
    <interactant intactId="EBI-12811757">
        <id>O95436-2</id>
    </interactant>
    <interactant intactId="EBI-10294651">
        <id>Q99726</id>
        <label>SLC30A3</label>
    </interactant>
    <organismsDiffer>false</organismsDiffer>
    <experiments>5</experiments>
</comment>
<comment type="interaction">
    <interactant intactId="EBI-12811757">
        <id>O95436-2</id>
    </interactant>
    <interactant intactId="EBI-12870360">
        <id>P78382</id>
        <label>SLC35A1</label>
    </interactant>
    <organismsDiffer>false</organismsDiffer>
    <experiments>3</experiments>
</comment>
<comment type="interaction">
    <interactant intactId="EBI-12811757">
        <id>O95436-2</id>
    </interactant>
    <interactant intactId="EBI-1051105">
        <id>Q92504</id>
        <label>SLC39A7</label>
    </interactant>
    <organismsDiffer>false</organismsDiffer>
    <experiments>3</experiments>
</comment>
<comment type="interaction">
    <interactant intactId="EBI-12811757">
        <id>O95436-2</id>
    </interactant>
    <interactant intactId="EBI-12200293">
        <id>P0DN84</id>
        <label>STRIT1</label>
    </interactant>
    <organismsDiffer>false</organismsDiffer>
    <experiments>3</experiments>
</comment>
<comment type="interaction">
    <interactant intactId="EBI-12811757">
        <id>O95436-2</id>
    </interactant>
    <interactant intactId="EBI-10329860">
        <id>Q9Y6I9</id>
        <label>TEX264</label>
    </interactant>
    <organismsDiffer>false</organismsDiffer>
    <experiments>3</experiments>
</comment>
<comment type="interaction">
    <interactant intactId="EBI-12811757">
        <id>O95436-2</id>
    </interactant>
    <interactant intactId="EBI-10694905">
        <id>Q5BJH2-2</id>
        <label>TMEM128</label>
    </interactant>
    <organismsDiffer>false</organismsDiffer>
    <experiments>3</experiments>
</comment>
<comment type="interaction">
    <interactant intactId="EBI-12811757">
        <id>O95436-2</id>
    </interactant>
    <interactant intactId="EBI-11528917">
        <id>Q8WW34-2</id>
        <label>TMEM239</label>
    </interactant>
    <organismsDiffer>false</organismsDiffer>
    <experiments>3</experiments>
</comment>
<comment type="interaction">
    <interactant intactId="EBI-12811757">
        <id>O95436-2</id>
    </interactant>
    <interactant intactId="EBI-12038591">
        <id>Q69YG0</id>
        <label>TMEM42</label>
    </interactant>
    <organismsDiffer>false</organismsDiffer>
    <experiments>3</experiments>
</comment>
<comment type="interaction">
    <interactant intactId="EBI-12811757">
        <id>O95436-2</id>
    </interactant>
    <interactant intactId="EBI-12195249">
        <id>Q5TGU0</id>
        <label>TSPO2</label>
    </interactant>
    <organismsDiffer>false</organismsDiffer>
    <experiments>3</experiments>
</comment>
<comment type="interaction">
    <interactant intactId="EBI-12811757">
        <id>O95436-2</id>
    </interactant>
    <interactant intactId="EBI-11988865">
        <id>A5PKU2</id>
        <label>TUSC5</label>
    </interactant>
    <organismsDiffer>false</organismsDiffer>
    <experiments>3</experiments>
</comment>
<comment type="subcellular location">
    <subcellularLocation>
        <location evidence="2">Apical cell membrane</location>
        <topology evidence="3">Multi-pass membrane protein</topology>
    </subcellularLocation>
    <text evidence="2">Localized at the brush border membranes of enterocytes.</text>
</comment>
<comment type="alternative products">
    <event type="alternative splicing"/>
    <isoform>
        <id>O95436-1</id>
        <name>1</name>
        <name>NaPi-3b</name>
        <sequence type="displayed"/>
    </isoform>
    <isoform>
        <id>O95436-2</id>
        <name>2</name>
        <name>NaPi-2b</name>
        <name>NaPi-IIb</name>
        <sequence type="described" ref="VSP_016755"/>
    </isoform>
</comment>
<comment type="tissue specificity">
    <text evidence="5 6">Highly expressed in lung. Also detected in pancreas, kidney, small intestine, ovary, testis, prostate and mammary gland. In lung, it is found in alveolar type II cells but not in bronchiolar epithelium.</text>
</comment>
<comment type="induction">
    <text evidence="7">Down-regulated by EGF.</text>
</comment>
<comment type="disease" evidence="11">
    <disease id="DI-02232">
        <name>Pulmonary alveolar microlithiasis</name>
        <acronym>PULAM</acronym>
        <description>Rare disease characterized by the deposition of calcium phosphate microliths throughout the lungs. Most patients are asymptomatic for several years or even for decades and generally, the diagnosis is incidental to clinical investigations unrelated to the disease. Cases with early-onset or rapid progression are rare. A 'sandstorm-appearing' chest roentgenogram is a typical diagnostic finding. The onset of this potentially lethal disease varies from the neonatal period to old age and the disease follows a long-term, progressive course, resulting in a slow deterioration of lung functions. Pulmonary alveolar microlithiasis is a recessive monogenic disease with full penetrance.</description>
        <dbReference type="MIM" id="265100"/>
    </disease>
    <text>The disease is caused by variants affecting the gene represented in this entry.</text>
</comment>
<comment type="disease">
    <text evidence="8">A chromosomal aberration involving SLC34A2 is found in a glioblastoma multiforme cell line U-118MG. Results in the formation of a SLC34A2-ROS1 chimeric protein that retains a constitutive kinase activity.</text>
</comment>
<comment type="similarity">
    <text evidence="14">Belongs to the SLC34A transporter family.</text>
</comment>
<comment type="sequence caution" evidence="14">
    <conflict type="erroneous initiation">
        <sequence resource="EMBL-CDS" id="BAC11354"/>
    </conflict>
    <text>Truncated N-terminus.</text>
</comment>
<organism>
    <name type="scientific">Homo sapiens</name>
    <name type="common">Human</name>
    <dbReference type="NCBI Taxonomy" id="9606"/>
    <lineage>
        <taxon>Eukaryota</taxon>
        <taxon>Metazoa</taxon>
        <taxon>Chordata</taxon>
        <taxon>Craniata</taxon>
        <taxon>Vertebrata</taxon>
        <taxon>Euteleostomi</taxon>
        <taxon>Mammalia</taxon>
        <taxon>Eutheria</taxon>
        <taxon>Euarchontoglires</taxon>
        <taxon>Primates</taxon>
        <taxon>Haplorrhini</taxon>
        <taxon>Catarrhini</taxon>
        <taxon>Hominidae</taxon>
        <taxon>Homo</taxon>
    </lineage>
</organism>
<dbReference type="EMBL" id="AF111856">
    <property type="protein sequence ID" value="AAC98695.1"/>
    <property type="molecule type" value="mRNA"/>
</dbReference>
<dbReference type="EMBL" id="AF146796">
    <property type="protein sequence ID" value="AAF31328.1"/>
    <property type="molecule type" value="mRNA"/>
</dbReference>
<dbReference type="EMBL" id="AC092436">
    <property type="status" value="NOT_ANNOTATED_CDS"/>
    <property type="molecule type" value="Genomic_DNA"/>
</dbReference>
<dbReference type="EMBL" id="BC142704">
    <property type="protein sequence ID" value="AAI42705.1"/>
    <property type="molecule type" value="mRNA"/>
</dbReference>
<dbReference type="EMBL" id="BC146666">
    <property type="protein sequence ID" value="AAI46667.1"/>
    <property type="molecule type" value="mRNA"/>
</dbReference>
<dbReference type="EMBL" id="AH011306">
    <property type="protein sequence ID" value="AAL55657.1"/>
    <property type="molecule type" value="Genomic_DNA"/>
</dbReference>
<dbReference type="EMBL" id="AK075015">
    <property type="protein sequence ID" value="BAC11354.1"/>
    <property type="status" value="ALT_INIT"/>
    <property type="molecule type" value="mRNA"/>
</dbReference>
<dbReference type="CCDS" id="CCDS3435.1">
    <molecule id="O95436-1"/>
</dbReference>
<dbReference type="CCDS" id="CCDS54750.1">
    <molecule id="O95436-2"/>
</dbReference>
<dbReference type="RefSeq" id="NP_001171469.2">
    <molecule id="O95436-2"/>
    <property type="nucleotide sequence ID" value="NM_001177998.2"/>
</dbReference>
<dbReference type="RefSeq" id="NP_001171470.2">
    <molecule id="O95436-2"/>
    <property type="nucleotide sequence ID" value="NM_001177999.2"/>
</dbReference>
<dbReference type="RefSeq" id="NP_006415.3">
    <molecule id="O95436-1"/>
    <property type="nucleotide sequence ID" value="NM_006424.3"/>
</dbReference>
<dbReference type="SMR" id="O95436"/>
<dbReference type="BioGRID" id="115819">
    <property type="interactions" value="50"/>
</dbReference>
<dbReference type="FunCoup" id="O95436">
    <property type="interactions" value="63"/>
</dbReference>
<dbReference type="IntAct" id="O95436">
    <property type="interactions" value="45"/>
</dbReference>
<dbReference type="STRING" id="9606.ENSP00000371483"/>
<dbReference type="BindingDB" id="O95436"/>
<dbReference type="ChEMBL" id="CHEMBL4295685"/>
<dbReference type="DrugBank" id="DB11348">
    <property type="generic name" value="Calcium Phosphate"/>
</dbReference>
<dbReference type="DrugBank" id="DB14481">
    <property type="generic name" value="Calcium phosphate dihydrate"/>
</dbReference>
<dbReference type="DrugBank" id="DB14502">
    <property type="generic name" value="Sodium phosphate, dibasic"/>
</dbReference>
<dbReference type="DrugBank" id="DB09449">
    <property type="generic name" value="Sodium phosphate, monobasic"/>
</dbReference>
<dbReference type="DrugBank" id="DB14503">
    <property type="generic name" value="Sodium phosphate, monobasic, unspecified form"/>
</dbReference>
<dbReference type="GuidetoPHARMACOLOGY" id="1136"/>
<dbReference type="TCDB" id="2.A.58.1.4">
    <property type="family name" value="the phosphate:na(+) symporter (pnas) family"/>
</dbReference>
<dbReference type="GlyCosmos" id="O95436">
    <property type="glycosylation" value="5 sites, No reported glycans"/>
</dbReference>
<dbReference type="GlyGen" id="O95436">
    <property type="glycosylation" value="6 sites, 1 O-linked glycan (1 site)"/>
</dbReference>
<dbReference type="iPTMnet" id="O95436"/>
<dbReference type="PhosphoSitePlus" id="O95436"/>
<dbReference type="BioMuta" id="SLC34A2"/>
<dbReference type="jPOST" id="O95436"/>
<dbReference type="MassIVE" id="O95436"/>
<dbReference type="PaxDb" id="9606-ENSP00000371483"/>
<dbReference type="PeptideAtlas" id="O95436"/>
<dbReference type="ProteomicsDB" id="50879">
    <molecule id="O95436-1"/>
</dbReference>
<dbReference type="ProteomicsDB" id="50880">
    <molecule id="O95436-2"/>
</dbReference>
<dbReference type="ABCD" id="O95436">
    <property type="antibodies" value="1 sequenced antibody"/>
</dbReference>
<dbReference type="Antibodypedia" id="51936">
    <property type="antibodies" value="163 antibodies from 26 providers"/>
</dbReference>
<dbReference type="DNASU" id="10568"/>
<dbReference type="Ensembl" id="ENST00000382051.8">
    <molecule id="O95436-1"/>
    <property type="protein sequence ID" value="ENSP00000371483.3"/>
    <property type="gene ID" value="ENSG00000157765.13"/>
</dbReference>
<dbReference type="Ensembl" id="ENST00000503434.5">
    <molecule id="O95436-2"/>
    <property type="protein sequence ID" value="ENSP00000423021.1"/>
    <property type="gene ID" value="ENSG00000157765.13"/>
</dbReference>
<dbReference type="Ensembl" id="ENST00000504570.5">
    <molecule id="O95436-2"/>
    <property type="protein sequence ID" value="ENSP00000425501.1"/>
    <property type="gene ID" value="ENSG00000157765.13"/>
</dbReference>
<dbReference type="Ensembl" id="ENST00000645788.1">
    <molecule id="O95436-2"/>
    <property type="protein sequence ID" value="ENSP00000494094.1"/>
    <property type="gene ID" value="ENSG00000157765.13"/>
</dbReference>
<dbReference type="GeneID" id="10568"/>
<dbReference type="KEGG" id="hsa:10568"/>
<dbReference type="MANE-Select" id="ENST00000382051.8">
    <property type="protein sequence ID" value="ENSP00000371483.3"/>
    <property type="RefSeq nucleotide sequence ID" value="NM_006424.3"/>
    <property type="RefSeq protein sequence ID" value="NP_006415.3"/>
</dbReference>
<dbReference type="UCSC" id="uc003grr.4">
    <molecule id="O95436-1"/>
    <property type="organism name" value="human"/>
</dbReference>
<dbReference type="AGR" id="HGNC:11020"/>
<dbReference type="CTD" id="10568"/>
<dbReference type="DisGeNET" id="10568"/>
<dbReference type="GeneCards" id="SLC34A2"/>
<dbReference type="HGNC" id="HGNC:11020">
    <property type="gene designation" value="SLC34A2"/>
</dbReference>
<dbReference type="HPA" id="ENSG00000157765">
    <property type="expression patterns" value="Tissue enriched (lung)"/>
</dbReference>
<dbReference type="MalaCards" id="SLC34A2"/>
<dbReference type="MIM" id="265100">
    <property type="type" value="phenotype"/>
</dbReference>
<dbReference type="MIM" id="604217">
    <property type="type" value="gene"/>
</dbReference>
<dbReference type="neXtProt" id="NX_O95436"/>
<dbReference type="OpenTargets" id="ENSG00000157765"/>
<dbReference type="Orphanet" id="60025">
    <property type="disease" value="Pulmonary alveolar microlithiasis"/>
</dbReference>
<dbReference type="PharmGKB" id="PA35888"/>
<dbReference type="VEuPathDB" id="HostDB:ENSG00000157765"/>
<dbReference type="eggNOG" id="ENOG502QQ3I">
    <property type="taxonomic scope" value="Eukaryota"/>
</dbReference>
<dbReference type="GeneTree" id="ENSGT00950000183177"/>
<dbReference type="HOGENOM" id="CLU_025063_0_0_1"/>
<dbReference type="InParanoid" id="O95436"/>
<dbReference type="OMA" id="GCPKCCR"/>
<dbReference type="OrthoDB" id="76259at2759"/>
<dbReference type="PAN-GO" id="O95436">
    <property type="GO annotations" value="6 GO annotations based on evolutionary models"/>
</dbReference>
<dbReference type="PhylomeDB" id="O95436"/>
<dbReference type="TreeFam" id="TF313981"/>
<dbReference type="BioCyc" id="MetaCyc:ENSG00000157765-MONOMER"/>
<dbReference type="PathwayCommons" id="O95436"/>
<dbReference type="Reactome" id="R-HSA-427589">
    <property type="pathway name" value="Type II Na+/Pi cotransporters"/>
</dbReference>
<dbReference type="Reactome" id="R-HSA-5619045">
    <property type="pathway name" value="Defective SLC34A2 causes pulmonary alveolar microlithiasis (PALM)"/>
</dbReference>
<dbReference type="Reactome" id="R-HSA-5683826">
    <property type="pathway name" value="Surfactant metabolism"/>
</dbReference>
<dbReference type="Reactome" id="R-HSA-5687583">
    <property type="pathway name" value="Defective SLC34A2 causes PALM"/>
</dbReference>
<dbReference type="SignaLink" id="O95436"/>
<dbReference type="SIGNOR" id="O95436"/>
<dbReference type="BioGRID-ORCS" id="10568">
    <property type="hits" value="15 hits in 1154 CRISPR screens"/>
</dbReference>
<dbReference type="ChiTaRS" id="SLC34A2">
    <property type="organism name" value="human"/>
</dbReference>
<dbReference type="GeneWiki" id="SLC34A2"/>
<dbReference type="GenomeRNAi" id="10568"/>
<dbReference type="Pharos" id="O95436">
    <property type="development level" value="Tchem"/>
</dbReference>
<dbReference type="PRO" id="PR:O95436"/>
<dbReference type="Proteomes" id="UP000005640">
    <property type="component" value="Chromosome 4"/>
</dbReference>
<dbReference type="RNAct" id="O95436">
    <property type="molecule type" value="protein"/>
</dbReference>
<dbReference type="Bgee" id="ENSG00000157765">
    <property type="expression patterns" value="Expressed in lower lobe of lung and 111 other cell types or tissues"/>
</dbReference>
<dbReference type="ExpressionAtlas" id="O95436">
    <property type="expression patterns" value="baseline and differential"/>
</dbReference>
<dbReference type="GO" id="GO:0016324">
    <property type="term" value="C:apical plasma membrane"/>
    <property type="evidence" value="ECO:0000314"/>
    <property type="project" value="UniProtKB"/>
</dbReference>
<dbReference type="GO" id="GO:0005903">
    <property type="term" value="C:brush border"/>
    <property type="evidence" value="ECO:0000318"/>
    <property type="project" value="GO_Central"/>
</dbReference>
<dbReference type="GO" id="GO:0031526">
    <property type="term" value="C:brush border membrane"/>
    <property type="evidence" value="ECO:0000250"/>
    <property type="project" value="UniProtKB"/>
</dbReference>
<dbReference type="GO" id="GO:0016020">
    <property type="term" value="C:membrane"/>
    <property type="evidence" value="ECO:0000314"/>
    <property type="project" value="UniProtKB"/>
</dbReference>
<dbReference type="GO" id="GO:0005886">
    <property type="term" value="C:plasma membrane"/>
    <property type="evidence" value="ECO:0000304"/>
    <property type="project" value="Reactome"/>
</dbReference>
<dbReference type="GO" id="GO:0031982">
    <property type="term" value="C:vesicle"/>
    <property type="evidence" value="ECO:0007005"/>
    <property type="project" value="UniProtKB"/>
</dbReference>
<dbReference type="GO" id="GO:0042301">
    <property type="term" value="F:phosphate ion binding"/>
    <property type="evidence" value="ECO:0000314"/>
    <property type="project" value="UniProtKB"/>
</dbReference>
<dbReference type="GO" id="GO:0031402">
    <property type="term" value="F:sodium ion binding"/>
    <property type="evidence" value="ECO:0000314"/>
    <property type="project" value="UniProtKB"/>
</dbReference>
<dbReference type="GO" id="GO:0005436">
    <property type="term" value="F:sodium:phosphate symporter activity"/>
    <property type="evidence" value="ECO:0000314"/>
    <property type="project" value="UniProtKB"/>
</dbReference>
<dbReference type="GO" id="GO:0001701">
    <property type="term" value="P:in utero embryonic development"/>
    <property type="evidence" value="ECO:0007669"/>
    <property type="project" value="Ensembl"/>
</dbReference>
<dbReference type="GO" id="GO:0030643">
    <property type="term" value="P:intracellular phosphate ion homeostasis"/>
    <property type="evidence" value="ECO:0000314"/>
    <property type="project" value="UniProtKB"/>
</dbReference>
<dbReference type="GO" id="GO:0006817">
    <property type="term" value="P:phosphate ion transport"/>
    <property type="evidence" value="ECO:0000314"/>
    <property type="project" value="UniProtKB"/>
</dbReference>
<dbReference type="GO" id="GO:0043627">
    <property type="term" value="P:response to estrogen"/>
    <property type="evidence" value="ECO:0000270"/>
    <property type="project" value="UniProtKB"/>
</dbReference>
<dbReference type="GO" id="GO:0044341">
    <property type="term" value="P:sodium-dependent phosphate transport"/>
    <property type="evidence" value="ECO:0000318"/>
    <property type="project" value="GO_Central"/>
</dbReference>
<dbReference type="InterPro" id="IPR003841">
    <property type="entry name" value="Na/Pi_transpt"/>
</dbReference>
<dbReference type="NCBIfam" id="TIGR01013">
    <property type="entry name" value="2a58"/>
    <property type="match status" value="1"/>
</dbReference>
<dbReference type="NCBIfam" id="NF037997">
    <property type="entry name" value="Na_Pi_symport"/>
    <property type="match status" value="1"/>
</dbReference>
<dbReference type="PANTHER" id="PTHR10010:SF23">
    <property type="entry name" value="SODIUM-DEPENDENT PHOSPHATE TRANSPORT PROTEIN 2B"/>
    <property type="match status" value="1"/>
</dbReference>
<dbReference type="PANTHER" id="PTHR10010">
    <property type="entry name" value="SOLUTE CARRIER FAMILY 34 SODIUM PHOSPHATE , MEMBER 2-RELATED"/>
    <property type="match status" value="1"/>
</dbReference>
<dbReference type="Pfam" id="PF02690">
    <property type="entry name" value="Na_Pi_cotrans"/>
    <property type="match status" value="2"/>
</dbReference>
<name>NPT2B_HUMAN</name>
<evidence type="ECO:0000250" key="1">
    <source>
        <dbReference type="UniProtKB" id="Q06496"/>
    </source>
</evidence>
<evidence type="ECO:0000250" key="2">
    <source>
        <dbReference type="UniProtKB" id="Q9DBP0"/>
    </source>
</evidence>
<evidence type="ECO:0000255" key="3"/>
<evidence type="ECO:0000256" key="4">
    <source>
        <dbReference type="SAM" id="MobiDB-lite"/>
    </source>
</evidence>
<evidence type="ECO:0000269" key="5">
    <source>
    </source>
</evidence>
<evidence type="ECO:0000269" key="6">
    <source>
    </source>
</evidence>
<evidence type="ECO:0000269" key="7">
    <source>
    </source>
</evidence>
<evidence type="ECO:0000269" key="8">
    <source>
    </source>
</evidence>
<evidence type="ECO:0000269" key="9">
    <source>
    </source>
</evidence>
<evidence type="ECO:0000269" key="10">
    <source>
    </source>
</evidence>
<evidence type="ECO:0000269" key="11">
    <source>
    </source>
</evidence>
<evidence type="ECO:0000303" key="12">
    <source>
    </source>
</evidence>
<evidence type="ECO:0000303" key="13">
    <source>
    </source>
</evidence>
<evidence type="ECO:0000305" key="14"/>
<evidence type="ECO:0000305" key="15">
    <source>
    </source>
</evidence>
<evidence type="ECO:0000305" key="16">
    <source>
    </source>
</evidence>
<protein>
    <recommendedName>
        <fullName>Sodium-dependent phosphate transport protein 2B</fullName>
        <shortName>Sodium-phosphate transport protein 2B</shortName>
    </recommendedName>
    <alternativeName>
        <fullName>Na(+)-dependent phosphate cotransporter 2B</fullName>
    </alternativeName>
    <alternativeName>
        <fullName>NaPi3b</fullName>
    </alternativeName>
    <alternativeName>
        <fullName>Sodium/phosphate cotransporter 2B</fullName>
        <shortName>Na(+)/Pi cotransporter 2B</shortName>
        <shortName>NaPi-2b</shortName>
    </alternativeName>
    <alternativeName>
        <fullName>Solute carrier family 34 member 2</fullName>
    </alternativeName>
</protein>
<keyword id="KW-0025">Alternative splicing</keyword>
<keyword id="KW-1003">Cell membrane</keyword>
<keyword id="KW-0225">Disease variant</keyword>
<keyword id="KW-1015">Disulfide bond</keyword>
<keyword id="KW-0325">Glycoprotein</keyword>
<keyword id="KW-0406">Ion transport</keyword>
<keyword id="KW-0472">Membrane</keyword>
<keyword id="KW-1267">Proteomics identification</keyword>
<keyword id="KW-1185">Reference proteome</keyword>
<keyword id="KW-0915">Sodium</keyword>
<keyword id="KW-0739">Sodium transport</keyword>
<keyword id="KW-0769">Symport</keyword>
<keyword id="KW-0812">Transmembrane</keyword>
<keyword id="KW-1133">Transmembrane helix</keyword>
<keyword id="KW-0813">Transport</keyword>